<feature type="chain" id="PRO_1000132426" description="Glycine cleavage system H protein">
    <location>
        <begin position="1"/>
        <end position="125"/>
    </location>
</feature>
<feature type="domain" description="Lipoyl-binding" evidence="2">
    <location>
        <begin position="19"/>
        <end position="101"/>
    </location>
</feature>
<feature type="modified residue" description="N6-lipoyllysine" evidence="1">
    <location>
        <position position="60"/>
    </location>
</feature>
<protein>
    <recommendedName>
        <fullName evidence="1">Glycine cleavage system H protein</fullName>
    </recommendedName>
</protein>
<gene>
    <name evidence="1" type="primary">gcvH</name>
    <name type="ordered locus">Msil_1216</name>
</gene>
<proteinExistence type="inferred from homology"/>
<sequence>MPNIRYTKDHEYIRPDPDGAVVGITDFAQSQLGDVVFVELPVIGAVLARGAEAAVVESVKAASGVNAPASGEVIEVNSALEEKPGLVNEDPNGSGWFFKLTLADPSELDALMDEEAYEAFIKTIA</sequence>
<dbReference type="EMBL" id="CP001280">
    <property type="protein sequence ID" value="ACK50185.1"/>
    <property type="molecule type" value="Genomic_DNA"/>
</dbReference>
<dbReference type="RefSeq" id="WP_012590255.1">
    <property type="nucleotide sequence ID" value="NC_011666.1"/>
</dbReference>
<dbReference type="SMR" id="B8EPI0"/>
<dbReference type="STRING" id="395965.Msil_1216"/>
<dbReference type="KEGG" id="msl:Msil_1216"/>
<dbReference type="eggNOG" id="COG0509">
    <property type="taxonomic scope" value="Bacteria"/>
</dbReference>
<dbReference type="HOGENOM" id="CLU_097408_2_0_5"/>
<dbReference type="OrthoDB" id="9796712at2"/>
<dbReference type="Proteomes" id="UP000002257">
    <property type="component" value="Chromosome"/>
</dbReference>
<dbReference type="GO" id="GO:0005829">
    <property type="term" value="C:cytosol"/>
    <property type="evidence" value="ECO:0007669"/>
    <property type="project" value="TreeGrafter"/>
</dbReference>
<dbReference type="GO" id="GO:0005960">
    <property type="term" value="C:glycine cleavage complex"/>
    <property type="evidence" value="ECO:0007669"/>
    <property type="project" value="InterPro"/>
</dbReference>
<dbReference type="GO" id="GO:0019464">
    <property type="term" value="P:glycine decarboxylation via glycine cleavage system"/>
    <property type="evidence" value="ECO:0007669"/>
    <property type="project" value="UniProtKB-UniRule"/>
</dbReference>
<dbReference type="CDD" id="cd06848">
    <property type="entry name" value="GCS_H"/>
    <property type="match status" value="1"/>
</dbReference>
<dbReference type="Gene3D" id="2.40.50.100">
    <property type="match status" value="1"/>
</dbReference>
<dbReference type="HAMAP" id="MF_00272">
    <property type="entry name" value="GcvH"/>
    <property type="match status" value="1"/>
</dbReference>
<dbReference type="InterPro" id="IPR003016">
    <property type="entry name" value="2-oxoA_DH_lipoyl-BS"/>
</dbReference>
<dbReference type="InterPro" id="IPR000089">
    <property type="entry name" value="Biotin_lipoyl"/>
</dbReference>
<dbReference type="InterPro" id="IPR002930">
    <property type="entry name" value="GCV_H"/>
</dbReference>
<dbReference type="InterPro" id="IPR033753">
    <property type="entry name" value="GCV_H/Fam206"/>
</dbReference>
<dbReference type="InterPro" id="IPR017453">
    <property type="entry name" value="GCV_H_sub"/>
</dbReference>
<dbReference type="InterPro" id="IPR011053">
    <property type="entry name" value="Single_hybrid_motif"/>
</dbReference>
<dbReference type="NCBIfam" id="TIGR00527">
    <property type="entry name" value="gcvH"/>
    <property type="match status" value="1"/>
</dbReference>
<dbReference type="NCBIfam" id="NF002270">
    <property type="entry name" value="PRK01202.1"/>
    <property type="match status" value="1"/>
</dbReference>
<dbReference type="PANTHER" id="PTHR11715">
    <property type="entry name" value="GLYCINE CLEAVAGE SYSTEM H PROTEIN"/>
    <property type="match status" value="1"/>
</dbReference>
<dbReference type="PANTHER" id="PTHR11715:SF3">
    <property type="entry name" value="GLYCINE CLEAVAGE SYSTEM H PROTEIN-RELATED"/>
    <property type="match status" value="1"/>
</dbReference>
<dbReference type="Pfam" id="PF01597">
    <property type="entry name" value="GCV_H"/>
    <property type="match status" value="1"/>
</dbReference>
<dbReference type="SUPFAM" id="SSF51230">
    <property type="entry name" value="Single hybrid motif"/>
    <property type="match status" value="1"/>
</dbReference>
<dbReference type="PROSITE" id="PS50968">
    <property type="entry name" value="BIOTINYL_LIPOYL"/>
    <property type="match status" value="1"/>
</dbReference>
<dbReference type="PROSITE" id="PS00189">
    <property type="entry name" value="LIPOYL"/>
    <property type="match status" value="1"/>
</dbReference>
<evidence type="ECO:0000255" key="1">
    <source>
        <dbReference type="HAMAP-Rule" id="MF_00272"/>
    </source>
</evidence>
<evidence type="ECO:0000255" key="2">
    <source>
        <dbReference type="PROSITE-ProRule" id="PRU01066"/>
    </source>
</evidence>
<organism>
    <name type="scientific">Methylocella silvestris (strain DSM 15510 / CIP 108128 / LMG 27833 / NCIMB 13906 / BL2)</name>
    <dbReference type="NCBI Taxonomy" id="395965"/>
    <lineage>
        <taxon>Bacteria</taxon>
        <taxon>Pseudomonadati</taxon>
        <taxon>Pseudomonadota</taxon>
        <taxon>Alphaproteobacteria</taxon>
        <taxon>Hyphomicrobiales</taxon>
        <taxon>Beijerinckiaceae</taxon>
        <taxon>Methylocella</taxon>
    </lineage>
</organism>
<name>GCSH_METSB</name>
<accession>B8EPI0</accession>
<keyword id="KW-0450">Lipoyl</keyword>
<keyword id="KW-1185">Reference proteome</keyword>
<comment type="function">
    <text evidence="1">The glycine cleavage system catalyzes the degradation of glycine. The H protein shuttles the methylamine group of glycine from the P protein to the T protein.</text>
</comment>
<comment type="cofactor">
    <cofactor evidence="1">
        <name>(R)-lipoate</name>
        <dbReference type="ChEBI" id="CHEBI:83088"/>
    </cofactor>
    <text evidence="1">Binds 1 lipoyl cofactor covalently.</text>
</comment>
<comment type="subunit">
    <text evidence="1">The glycine cleavage system is composed of four proteins: P, T, L and H.</text>
</comment>
<comment type="similarity">
    <text evidence="1">Belongs to the GcvH family.</text>
</comment>
<reference key="1">
    <citation type="journal article" date="2010" name="J. Bacteriol.">
        <title>Complete genome sequence of the aerobic facultative methanotroph Methylocella silvestris BL2.</title>
        <authorList>
            <person name="Chen Y."/>
            <person name="Crombie A."/>
            <person name="Rahman M.T."/>
            <person name="Dedysh S.N."/>
            <person name="Liesack W."/>
            <person name="Stott M.B."/>
            <person name="Alam M."/>
            <person name="Theisen A.R."/>
            <person name="Murrell J.C."/>
            <person name="Dunfield P.F."/>
        </authorList>
    </citation>
    <scope>NUCLEOTIDE SEQUENCE [LARGE SCALE GENOMIC DNA]</scope>
    <source>
        <strain>DSM 15510 / CIP 108128 / LMG 27833 / NCIMB 13906 / BL2</strain>
    </source>
</reference>